<evidence type="ECO:0000250" key="1"/>
<evidence type="ECO:0000256" key="2">
    <source>
        <dbReference type="SAM" id="MobiDB-lite"/>
    </source>
</evidence>
<evidence type="ECO:0000305" key="3"/>
<accession>B6JX19</accession>
<protein>
    <recommendedName>
        <fullName>U3 small nucleolar RNA-associated protein 25</fullName>
        <shortName>U3 snoRNA-associated protein 25</shortName>
    </recommendedName>
    <alternativeName>
        <fullName>U three protein 25</fullName>
    </alternativeName>
</protein>
<reference key="1">
    <citation type="journal article" date="2011" name="Science">
        <title>Comparative functional genomics of the fission yeasts.</title>
        <authorList>
            <person name="Rhind N."/>
            <person name="Chen Z."/>
            <person name="Yassour M."/>
            <person name="Thompson D.A."/>
            <person name="Haas B.J."/>
            <person name="Habib N."/>
            <person name="Wapinski I."/>
            <person name="Roy S."/>
            <person name="Lin M.F."/>
            <person name="Heiman D.I."/>
            <person name="Young S.K."/>
            <person name="Furuya K."/>
            <person name="Guo Y."/>
            <person name="Pidoux A."/>
            <person name="Chen H.M."/>
            <person name="Robbertse B."/>
            <person name="Goldberg J.M."/>
            <person name="Aoki K."/>
            <person name="Bayne E.H."/>
            <person name="Berlin A.M."/>
            <person name="Desjardins C.A."/>
            <person name="Dobbs E."/>
            <person name="Dukaj L."/>
            <person name="Fan L."/>
            <person name="FitzGerald M.G."/>
            <person name="French C."/>
            <person name="Gujja S."/>
            <person name="Hansen K."/>
            <person name="Keifenheim D."/>
            <person name="Levin J.Z."/>
            <person name="Mosher R.A."/>
            <person name="Mueller C.A."/>
            <person name="Pfiffner J."/>
            <person name="Priest M."/>
            <person name="Russ C."/>
            <person name="Smialowska A."/>
            <person name="Swoboda P."/>
            <person name="Sykes S.M."/>
            <person name="Vaughn M."/>
            <person name="Vengrova S."/>
            <person name="Yoder R."/>
            <person name="Zeng Q."/>
            <person name="Allshire R."/>
            <person name="Baulcombe D."/>
            <person name="Birren B.W."/>
            <person name="Brown W."/>
            <person name="Ekwall K."/>
            <person name="Kellis M."/>
            <person name="Leatherwood J."/>
            <person name="Levin H."/>
            <person name="Margalit H."/>
            <person name="Martienssen R."/>
            <person name="Nieduszynski C.A."/>
            <person name="Spatafora J.W."/>
            <person name="Friedman N."/>
            <person name="Dalgaard J.Z."/>
            <person name="Baumann P."/>
            <person name="Niki H."/>
            <person name="Regev A."/>
            <person name="Nusbaum C."/>
        </authorList>
    </citation>
    <scope>NUCLEOTIDE SEQUENCE [LARGE SCALE GENOMIC DNA]</scope>
    <source>
        <strain>yFS275 / FY16936</strain>
    </source>
</reference>
<sequence length="640" mass="74268">MSDLSKDELANDAYQALLVMLKSDGKHKLKEEEAPRKRQKRNKVTEKLSVAQEPEEDEENIEDAEQESASEVQELLEAGDHLQEDEVPKENDPFHTHYEAPSTEELASAITKLNNGEIKKENLDCSLGVKQIQQVPSEKLSLRLSSFAPANVSDLKLKQRLLRSYLSIKPSGNMTNLQCELAKHIFNYEDVLFSNVSSKCDTLVRNLYTLHAINHVYKVRDHVLKNSAKLSQNQELEFRDQGYTRPKVLILLPTRNACLQFVETLIQFTGAEQVENRKRFSNEFSIETEVISEKKPEDFRQLFAGNTDDMFRLGIKFTRKTIKLFSQFYNSDIIVASPLGLRMAIGNKSDKKRDFDYLSSIEVAIVDQADALLMQNWEHLEYVFEHMNKLPKNSHGCDFSRVRPWYLEEQSRYLRQTLMFSHYNAVDINAFYLHEMLNLAGRVKFHPKQKGVLNSLGYHITQTFARVQTESLLKVPDARFEHFTSTLVPQLLKNAMGGILVYIPSYFDYVRVRNYFEDEAISYVSICEYTKNSDISRARTQFYQNRKQIMLYTERAHHFRRFDFRGVRGIIMYAPPTNAQFYVELTRMPMRSISDGILDADAAKCRVLYTKYDMIPMEPIVGSERVTNMCKGKHDIYEFV</sequence>
<comment type="function">
    <text evidence="1">DEAD-box RNA helicase-like protein required for pre-18S rRNA processing, specifically at sites A0, A1, and A2.</text>
</comment>
<comment type="subunit">
    <text evidence="1">Component of the ribosomal small subunit (SSU) processome composed of at least 40 protein subunits and snoRNA U3.</text>
</comment>
<comment type="subcellular location">
    <subcellularLocation>
        <location evidence="1">Nucleus</location>
        <location evidence="1">Nucleolus</location>
    </subcellularLocation>
</comment>
<comment type="similarity">
    <text evidence="3">Belongs to the UTP25 family.</text>
</comment>
<feature type="chain" id="PRO_0000408138" description="U3 small nucleolar RNA-associated protein 25">
    <location>
        <begin position="1"/>
        <end position="640"/>
    </location>
</feature>
<feature type="region of interest" description="Disordered" evidence="2">
    <location>
        <begin position="24"/>
        <end position="72"/>
    </location>
</feature>
<feature type="compositionally biased region" description="Basic and acidic residues" evidence="2">
    <location>
        <begin position="24"/>
        <end position="36"/>
    </location>
</feature>
<feature type="compositionally biased region" description="Acidic residues" evidence="2">
    <location>
        <begin position="53"/>
        <end position="68"/>
    </location>
</feature>
<gene>
    <name type="primary">utp25</name>
    <name type="ORF">SJAG_00945</name>
</gene>
<dbReference type="EMBL" id="KE651166">
    <property type="protein sequence ID" value="EEB05920.1"/>
    <property type="molecule type" value="Genomic_DNA"/>
</dbReference>
<dbReference type="RefSeq" id="XP_002172213.1">
    <property type="nucleotide sequence ID" value="XM_002172177.2"/>
</dbReference>
<dbReference type="STRING" id="402676.B6JX19"/>
<dbReference type="EnsemblFungi" id="EEB05920">
    <property type="protein sequence ID" value="EEB05920"/>
    <property type="gene ID" value="SJAG_00945"/>
</dbReference>
<dbReference type="GeneID" id="7050817"/>
<dbReference type="JaponicusDB" id="SJAG_00945">
    <property type="gene designation" value="utp25"/>
</dbReference>
<dbReference type="VEuPathDB" id="FungiDB:SJAG_00945"/>
<dbReference type="eggNOG" id="KOG2340">
    <property type="taxonomic scope" value="Eukaryota"/>
</dbReference>
<dbReference type="HOGENOM" id="CLU_018705_0_1_1"/>
<dbReference type="OMA" id="QDRGDTF"/>
<dbReference type="OrthoDB" id="10264378at2759"/>
<dbReference type="Proteomes" id="UP000001744">
    <property type="component" value="Unassembled WGS sequence"/>
</dbReference>
<dbReference type="GO" id="GO:0005730">
    <property type="term" value="C:nucleolus"/>
    <property type="evidence" value="ECO:0000318"/>
    <property type="project" value="GO_Central"/>
</dbReference>
<dbReference type="GO" id="GO:0032040">
    <property type="term" value="C:small-subunit processome"/>
    <property type="evidence" value="ECO:0000318"/>
    <property type="project" value="GO_Central"/>
</dbReference>
<dbReference type="GO" id="GO:0019843">
    <property type="term" value="F:rRNA binding"/>
    <property type="evidence" value="ECO:0000318"/>
    <property type="project" value="GO_Central"/>
</dbReference>
<dbReference type="GO" id="GO:0034511">
    <property type="term" value="F:U3 snoRNA binding"/>
    <property type="evidence" value="ECO:0000318"/>
    <property type="project" value="GO_Central"/>
</dbReference>
<dbReference type="GO" id="GO:0000462">
    <property type="term" value="P:maturation of SSU-rRNA from tricistronic rRNA transcript (SSU-rRNA, 5.8S rRNA, LSU-rRNA)"/>
    <property type="evidence" value="ECO:0000318"/>
    <property type="project" value="GO_Central"/>
</dbReference>
<dbReference type="FunFam" id="3.40.50.300:FF:002356">
    <property type="entry name" value="U3 small nucleolar RNA-associated protein 25"/>
    <property type="match status" value="1"/>
</dbReference>
<dbReference type="Gene3D" id="3.40.50.300">
    <property type="entry name" value="P-loop containing nucleotide triphosphate hydrolases"/>
    <property type="match status" value="1"/>
</dbReference>
<dbReference type="InterPro" id="IPR027417">
    <property type="entry name" value="P-loop_NTPase"/>
</dbReference>
<dbReference type="InterPro" id="IPR010678">
    <property type="entry name" value="UTP25"/>
</dbReference>
<dbReference type="InterPro" id="IPR053939">
    <property type="entry name" value="UTP25_C"/>
</dbReference>
<dbReference type="InterPro" id="IPR053940">
    <property type="entry name" value="UTP25_NTPase-like"/>
</dbReference>
<dbReference type="PANTHER" id="PTHR12933">
    <property type="entry name" value="ORF PROTEIN-RELATED"/>
    <property type="match status" value="1"/>
</dbReference>
<dbReference type="PANTHER" id="PTHR12933:SF0">
    <property type="entry name" value="U3 SMALL NUCLEOLAR RNA-ASSOCIATED PROTEIN 25 HOMOLOG"/>
    <property type="match status" value="1"/>
</dbReference>
<dbReference type="Pfam" id="PF06862">
    <property type="entry name" value="Utp25_C"/>
    <property type="match status" value="1"/>
</dbReference>
<dbReference type="Pfam" id="PF22916">
    <property type="entry name" value="UTP25_NTPase-like"/>
    <property type="match status" value="1"/>
</dbReference>
<dbReference type="SUPFAM" id="SSF52540">
    <property type="entry name" value="P-loop containing nucleoside triphosphate hydrolases"/>
    <property type="match status" value="2"/>
</dbReference>
<proteinExistence type="inferred from homology"/>
<name>UTP25_SCHJY</name>
<organism>
    <name type="scientific">Schizosaccharomyces japonicus (strain yFS275 / FY16936)</name>
    <name type="common">Fission yeast</name>
    <dbReference type="NCBI Taxonomy" id="402676"/>
    <lineage>
        <taxon>Eukaryota</taxon>
        <taxon>Fungi</taxon>
        <taxon>Dikarya</taxon>
        <taxon>Ascomycota</taxon>
        <taxon>Taphrinomycotina</taxon>
        <taxon>Schizosaccharomycetes</taxon>
        <taxon>Schizosaccharomycetales</taxon>
        <taxon>Schizosaccharomycetaceae</taxon>
        <taxon>Schizosaccharomyces</taxon>
    </lineage>
</organism>
<keyword id="KW-0539">Nucleus</keyword>
<keyword id="KW-1185">Reference proteome</keyword>
<keyword id="KW-0687">Ribonucleoprotein</keyword>
<keyword id="KW-0690">Ribosome biogenesis</keyword>
<keyword id="KW-0698">rRNA processing</keyword>